<reference key="1">
    <citation type="submission" date="2006-11" db="EMBL/GenBank/DDBJ databases">
        <title>Evolution and sequence variation of human beta-defensin genes.</title>
        <authorList>
            <person name="Hollox E.J."/>
            <person name="Armour J.A.L."/>
        </authorList>
    </citation>
    <scope>NUCLEOTIDE SEQUENCE [GENOMIC DNA]</scope>
</reference>
<evidence type="ECO:0000250" key="1"/>
<evidence type="ECO:0000305" key="2"/>
<proteinExistence type="inferred from homology"/>
<protein>
    <recommendedName>
        <fullName>Beta-defensin 103A</fullName>
    </recommendedName>
    <alternativeName>
        <fullName>Defensin, beta 103</fullName>
    </alternativeName>
    <alternativeName>
        <fullName>Defensin, beta 103A</fullName>
    </alternativeName>
</protein>
<keyword id="KW-0044">Antibiotic</keyword>
<keyword id="KW-0929">Antimicrobial</keyword>
<keyword id="KW-0211">Defensin</keyword>
<keyword id="KW-1015">Disulfide bond</keyword>
<keyword id="KW-0964">Secreted</keyword>
<keyword id="KW-0732">Signal</keyword>
<organism>
    <name type="scientific">Pongo pygmaeus</name>
    <name type="common">Bornean orangutan</name>
    <dbReference type="NCBI Taxonomy" id="9600"/>
    <lineage>
        <taxon>Eukaryota</taxon>
        <taxon>Metazoa</taxon>
        <taxon>Chordata</taxon>
        <taxon>Craniata</taxon>
        <taxon>Vertebrata</taxon>
        <taxon>Euteleostomi</taxon>
        <taxon>Mammalia</taxon>
        <taxon>Eutheria</taxon>
        <taxon>Euarchontoglires</taxon>
        <taxon>Primates</taxon>
        <taxon>Haplorrhini</taxon>
        <taxon>Catarrhini</taxon>
        <taxon>Hominidae</taxon>
        <taxon>Pongo</taxon>
    </lineage>
</organism>
<gene>
    <name type="primary">DEFB103A</name>
    <name type="synonym">DEFB103</name>
</gene>
<dbReference type="EMBL" id="AM410105">
    <property type="protein sequence ID" value="CAL68920.1"/>
    <property type="molecule type" value="Genomic_DNA"/>
</dbReference>
<dbReference type="SMR" id="A4H200"/>
<dbReference type="GO" id="GO:0005615">
    <property type="term" value="C:extracellular space"/>
    <property type="evidence" value="ECO:0007669"/>
    <property type="project" value="TreeGrafter"/>
</dbReference>
<dbReference type="GO" id="GO:0031731">
    <property type="term" value="F:CCR6 chemokine receptor binding"/>
    <property type="evidence" value="ECO:0007669"/>
    <property type="project" value="TreeGrafter"/>
</dbReference>
<dbReference type="GO" id="GO:0042056">
    <property type="term" value="F:chemoattractant activity"/>
    <property type="evidence" value="ECO:0007669"/>
    <property type="project" value="TreeGrafter"/>
</dbReference>
<dbReference type="GO" id="GO:0060326">
    <property type="term" value="P:cell chemotaxis"/>
    <property type="evidence" value="ECO:0007669"/>
    <property type="project" value="TreeGrafter"/>
</dbReference>
<dbReference type="GO" id="GO:0042742">
    <property type="term" value="P:defense response to bacterium"/>
    <property type="evidence" value="ECO:0007669"/>
    <property type="project" value="UniProtKB-KW"/>
</dbReference>
<dbReference type="FunFam" id="3.10.360.10:FF:000001">
    <property type="entry name" value="Beta-defensin 1"/>
    <property type="match status" value="1"/>
</dbReference>
<dbReference type="Gene3D" id="3.10.360.10">
    <property type="entry name" value="Antimicrobial Peptide, Beta-defensin 2, Chain A"/>
    <property type="match status" value="1"/>
</dbReference>
<dbReference type="InterPro" id="IPR001855">
    <property type="entry name" value="Defensin_beta-like"/>
</dbReference>
<dbReference type="PANTHER" id="PTHR20515">
    <property type="entry name" value="BETA-DEFENSIN"/>
    <property type="match status" value="1"/>
</dbReference>
<dbReference type="PANTHER" id="PTHR20515:SF0">
    <property type="entry name" value="BETA-DEFENSIN 103"/>
    <property type="match status" value="1"/>
</dbReference>
<dbReference type="Pfam" id="PF00711">
    <property type="entry name" value="Defensin_beta"/>
    <property type="match status" value="1"/>
</dbReference>
<dbReference type="SUPFAM" id="SSF57392">
    <property type="entry name" value="Defensin-like"/>
    <property type="match status" value="1"/>
</dbReference>
<comment type="function">
    <text evidence="1">Exhibits antimicrobial activity against Gram-positive and Gram-negative bacteria.</text>
</comment>
<comment type="subcellular location">
    <subcellularLocation>
        <location evidence="1">Secreted</location>
    </subcellularLocation>
</comment>
<comment type="similarity">
    <text evidence="2">Belongs to the beta-defensin family.</text>
</comment>
<sequence length="67" mass="7697">MRIHYLLFALLFLFLVPVPGHGGIINTLQKYYCRVRGGRCAVLSCLPKEEQIGKCSTRGRKCCRRKK</sequence>
<accession>A4H200</accession>
<feature type="signal peptide" evidence="1">
    <location>
        <begin position="1"/>
        <end position="22"/>
    </location>
</feature>
<feature type="peptide" id="PRO_0000289807" description="Beta-defensin 103A">
    <location>
        <begin position="23"/>
        <end position="67"/>
    </location>
</feature>
<feature type="disulfide bond" evidence="1">
    <location>
        <begin position="33"/>
        <end position="62"/>
    </location>
</feature>
<feature type="disulfide bond" evidence="1">
    <location>
        <begin position="40"/>
        <end position="55"/>
    </location>
</feature>
<feature type="disulfide bond" evidence="1">
    <location>
        <begin position="45"/>
        <end position="63"/>
    </location>
</feature>
<name>D103A_PONPY</name>